<evidence type="ECO:0000255" key="1">
    <source>
        <dbReference type="HAMAP-Rule" id="MF_00277"/>
    </source>
</evidence>
<evidence type="ECO:0000255" key="2">
    <source>
        <dbReference type="PROSITE-ProRule" id="PRU01175"/>
    </source>
</evidence>
<name>GLND_NITWN</name>
<feature type="chain" id="PRO_0000231682" description="Bifunctional uridylyltransferase/uridylyl-removing enzyme">
    <location>
        <begin position="1"/>
        <end position="925"/>
    </location>
</feature>
<feature type="domain" description="HD" evidence="2">
    <location>
        <begin position="498"/>
        <end position="621"/>
    </location>
</feature>
<feature type="domain" description="ACT 1" evidence="1">
    <location>
        <begin position="739"/>
        <end position="820"/>
    </location>
</feature>
<feature type="domain" description="ACT 2" evidence="1">
    <location>
        <begin position="849"/>
        <end position="925"/>
    </location>
</feature>
<feature type="region of interest" description="Uridylyltransferase">
    <location>
        <begin position="1"/>
        <end position="382"/>
    </location>
</feature>
<feature type="region of interest" description="Uridylyl-removing">
    <location>
        <begin position="383"/>
        <end position="738"/>
    </location>
</feature>
<accession>Q3SWE0</accession>
<organism>
    <name type="scientific">Nitrobacter winogradskyi (strain ATCC 25391 / DSM 10237 / CIP 104748 / NCIMB 11846 / Nb-255)</name>
    <dbReference type="NCBI Taxonomy" id="323098"/>
    <lineage>
        <taxon>Bacteria</taxon>
        <taxon>Pseudomonadati</taxon>
        <taxon>Pseudomonadota</taxon>
        <taxon>Alphaproteobacteria</taxon>
        <taxon>Hyphomicrobiales</taxon>
        <taxon>Nitrobacteraceae</taxon>
        <taxon>Nitrobacter</taxon>
    </lineage>
</organism>
<protein>
    <recommendedName>
        <fullName evidence="1">Bifunctional uridylyltransferase/uridylyl-removing enzyme</fullName>
        <shortName evidence="1">UTase/UR</shortName>
    </recommendedName>
    <alternativeName>
        <fullName evidence="1">Bifunctional [protein-PII] modification enzyme</fullName>
    </alternativeName>
    <alternativeName>
        <fullName evidence="1">Bifunctional nitrogen sensor protein</fullName>
    </alternativeName>
    <domain>
        <recommendedName>
            <fullName evidence="1">[Protein-PII] uridylyltransferase</fullName>
            <shortName evidence="1">PII uridylyltransferase</shortName>
            <shortName evidence="1">UTase</shortName>
            <ecNumber evidence="1">2.7.7.59</ecNumber>
        </recommendedName>
    </domain>
    <domain>
        <recommendedName>
            <fullName evidence="1">[Protein-PII]-UMP uridylyl-removing enzyme</fullName>
            <shortName evidence="1">UR</shortName>
            <ecNumber evidence="1">3.1.4.-</ecNumber>
        </recommendedName>
    </domain>
</protein>
<dbReference type="EC" id="2.7.7.59" evidence="1"/>
<dbReference type="EC" id="3.1.4.-" evidence="1"/>
<dbReference type="EMBL" id="CP000115">
    <property type="protein sequence ID" value="ABA03401.1"/>
    <property type="molecule type" value="Genomic_DNA"/>
</dbReference>
<dbReference type="RefSeq" id="WP_011313470.1">
    <property type="nucleotide sequence ID" value="NC_007406.1"/>
</dbReference>
<dbReference type="SMR" id="Q3SWE0"/>
<dbReference type="STRING" id="323098.Nwi_0133"/>
<dbReference type="KEGG" id="nwi:Nwi_0133"/>
<dbReference type="eggNOG" id="COG2844">
    <property type="taxonomic scope" value="Bacteria"/>
</dbReference>
<dbReference type="HOGENOM" id="CLU_012833_1_0_5"/>
<dbReference type="OrthoDB" id="9758038at2"/>
<dbReference type="Proteomes" id="UP000002531">
    <property type="component" value="Chromosome"/>
</dbReference>
<dbReference type="GO" id="GO:0008773">
    <property type="term" value="F:[protein-PII] uridylyltransferase activity"/>
    <property type="evidence" value="ECO:0007669"/>
    <property type="project" value="UniProtKB-UniRule"/>
</dbReference>
<dbReference type="GO" id="GO:0008081">
    <property type="term" value="F:phosphoric diester hydrolase activity"/>
    <property type="evidence" value="ECO:0007669"/>
    <property type="project" value="UniProtKB-UniRule"/>
</dbReference>
<dbReference type="GO" id="GO:0006808">
    <property type="term" value="P:regulation of nitrogen utilization"/>
    <property type="evidence" value="ECO:0007669"/>
    <property type="project" value="UniProtKB-UniRule"/>
</dbReference>
<dbReference type="CDD" id="cd04899">
    <property type="entry name" value="ACT_ACR-UUR-like_2"/>
    <property type="match status" value="1"/>
</dbReference>
<dbReference type="CDD" id="cd04900">
    <property type="entry name" value="ACT_UUR-like_1"/>
    <property type="match status" value="1"/>
</dbReference>
<dbReference type="CDD" id="cd05401">
    <property type="entry name" value="NT_GlnE_GlnD_like"/>
    <property type="match status" value="1"/>
</dbReference>
<dbReference type="Gene3D" id="3.30.70.260">
    <property type="match status" value="1"/>
</dbReference>
<dbReference type="Gene3D" id="3.30.460.10">
    <property type="entry name" value="Beta Polymerase, domain 2"/>
    <property type="match status" value="1"/>
</dbReference>
<dbReference type="Gene3D" id="1.10.3090.10">
    <property type="entry name" value="cca-adding enzyme, domain 2"/>
    <property type="match status" value="1"/>
</dbReference>
<dbReference type="HAMAP" id="MF_00277">
    <property type="entry name" value="PII_uridylyl_transf"/>
    <property type="match status" value="1"/>
</dbReference>
<dbReference type="InterPro" id="IPR045865">
    <property type="entry name" value="ACT-like_dom_sf"/>
</dbReference>
<dbReference type="InterPro" id="IPR002912">
    <property type="entry name" value="ACT_dom"/>
</dbReference>
<dbReference type="InterPro" id="IPR003607">
    <property type="entry name" value="HD/PDEase_dom"/>
</dbReference>
<dbReference type="InterPro" id="IPR006674">
    <property type="entry name" value="HD_domain"/>
</dbReference>
<dbReference type="InterPro" id="IPR043519">
    <property type="entry name" value="NT_sf"/>
</dbReference>
<dbReference type="InterPro" id="IPR013546">
    <property type="entry name" value="PII_UdlTrfase/GS_AdlTrfase"/>
</dbReference>
<dbReference type="InterPro" id="IPR002934">
    <property type="entry name" value="Polymerase_NTP_transf_dom"/>
</dbReference>
<dbReference type="InterPro" id="IPR010043">
    <property type="entry name" value="UTase/UR"/>
</dbReference>
<dbReference type="NCBIfam" id="NF003467">
    <property type="entry name" value="PRK05092.1"/>
    <property type="match status" value="1"/>
</dbReference>
<dbReference type="NCBIfam" id="TIGR01693">
    <property type="entry name" value="UTase_glnD"/>
    <property type="match status" value="1"/>
</dbReference>
<dbReference type="PANTHER" id="PTHR47320">
    <property type="entry name" value="BIFUNCTIONAL URIDYLYLTRANSFERASE/URIDYLYL-REMOVING ENZYME"/>
    <property type="match status" value="1"/>
</dbReference>
<dbReference type="PANTHER" id="PTHR47320:SF1">
    <property type="entry name" value="BIFUNCTIONAL URIDYLYLTRANSFERASE_URIDYLYL-REMOVING ENZYME"/>
    <property type="match status" value="1"/>
</dbReference>
<dbReference type="Pfam" id="PF01842">
    <property type="entry name" value="ACT"/>
    <property type="match status" value="1"/>
</dbReference>
<dbReference type="Pfam" id="PF08335">
    <property type="entry name" value="GlnD_UR_UTase"/>
    <property type="match status" value="1"/>
</dbReference>
<dbReference type="Pfam" id="PF01966">
    <property type="entry name" value="HD"/>
    <property type="match status" value="1"/>
</dbReference>
<dbReference type="Pfam" id="PF01909">
    <property type="entry name" value="NTP_transf_2"/>
    <property type="match status" value="1"/>
</dbReference>
<dbReference type="PIRSF" id="PIRSF006288">
    <property type="entry name" value="PII_uridyltransf"/>
    <property type="match status" value="1"/>
</dbReference>
<dbReference type="SMART" id="SM00471">
    <property type="entry name" value="HDc"/>
    <property type="match status" value="1"/>
</dbReference>
<dbReference type="SUPFAM" id="SSF55021">
    <property type="entry name" value="ACT-like"/>
    <property type="match status" value="2"/>
</dbReference>
<dbReference type="SUPFAM" id="SSF81301">
    <property type="entry name" value="Nucleotidyltransferase"/>
    <property type="match status" value="1"/>
</dbReference>
<dbReference type="SUPFAM" id="SSF81593">
    <property type="entry name" value="Nucleotidyltransferase substrate binding subunit/domain"/>
    <property type="match status" value="1"/>
</dbReference>
<dbReference type="SUPFAM" id="SSF81891">
    <property type="entry name" value="Poly A polymerase C-terminal region-like"/>
    <property type="match status" value="1"/>
</dbReference>
<dbReference type="PROSITE" id="PS51671">
    <property type="entry name" value="ACT"/>
    <property type="match status" value="2"/>
</dbReference>
<dbReference type="PROSITE" id="PS51831">
    <property type="entry name" value="HD"/>
    <property type="match status" value="1"/>
</dbReference>
<gene>
    <name evidence="1" type="primary">glnD</name>
    <name type="ordered locus">Nwi_0133</name>
</gene>
<reference key="1">
    <citation type="journal article" date="2006" name="Appl. Environ. Microbiol.">
        <title>Genome sequence of the chemolithoautotrophic nitrite-oxidizing bacterium Nitrobacter winogradskyi Nb-255.</title>
        <authorList>
            <person name="Starkenburg S.R."/>
            <person name="Chain P.S.G."/>
            <person name="Sayavedra-Soto L.A."/>
            <person name="Hauser L."/>
            <person name="Land M.L."/>
            <person name="Larimer F.W."/>
            <person name="Malfatti S.A."/>
            <person name="Klotz M.G."/>
            <person name="Bottomley P.J."/>
            <person name="Arp D.J."/>
            <person name="Hickey W.J."/>
        </authorList>
    </citation>
    <scope>NUCLEOTIDE SEQUENCE [LARGE SCALE GENOMIC DNA]</scope>
    <source>
        <strain>ATCC 25391 / DSM 10237 / CIP 104748 / NCIMB 11846 / Nb-255</strain>
    </source>
</reference>
<sequence>MVLPTTKDATAAGAGFDTVRIIGDIDALAEKHAGHEDVFRSAVSRLLKAELAKVRDAAQAKLLRDRHGRHCAEWLCFVQDEIIRLSFSAATRHLYHSPIPSDGERMAVVATGGYGRGLMAPESDIDLLFILPYKQTAWGEQVAEAILYCLWDMGLNVGHATRSVNESIRQARRDMTVRTGILEARFLTGDRALYDELISRFDTEVVQGTAAEFVAAKLAEREERHHRAGQSRYLVEPNVKDGKGGLRDLHTLFWIAKYVYRVRESHELLRRNVFDVREYRTFRRCADFLWSVRCNLHFATGRAEERLSFDLQREIAVRLGYTSHPGMQDVERFMKHYFLTAKDVGDLTAILCAKLEDQQAKPAPVLSRAMSKPPGAEVRRVPDSDDFIIDNNRINLAAPDLFKRDPVNLIRLFRLAQKNNLAFHPDALRMVRRSRRLINAQLREDPESNRLFIEILTSNDAETVLRRMNETGVLGEFIRAFGKIVSMMQFNMYHHYTVDEHLIRCIGILQDIERGDNDEVALAGELMRTINPEHRPVIYIATLLHDVAKGRPEDHSIAGARVARRLCPRLGFNAADTELVAWLIEQHLTMSKVAQSRDLSDRKTIENFAAVVQSVERMKLLTILTTADIRGVGPGVWNGWKAQLLRTLYYETEPVLTGGFSEVNRAQRMAAAEAEFRAAFTEWSGHELNAYIARHYPAYWLKVDLEHKIRHARFLRASEQSGRKLNINVGFDEARGVTELTILAADHPWLLSIIAGACASAGANIVDAQIYTTTDGQALDTIAISREYERDEDEGRRAARIAEIIEQVLEGRLRLPDVMPSRAAGKRLRPFVVEPKVTINNQWSDRHTMIEVSGLDRPGLLFQLTTAISKLNLNIASAHVATFGERARDVFYVTDLLGARITAPTRQAAIKRALVHLLASGNTAE</sequence>
<keyword id="KW-0378">Hydrolase</keyword>
<keyword id="KW-0460">Magnesium</keyword>
<keyword id="KW-0511">Multifunctional enzyme</keyword>
<keyword id="KW-0548">Nucleotidyltransferase</keyword>
<keyword id="KW-1185">Reference proteome</keyword>
<keyword id="KW-0677">Repeat</keyword>
<keyword id="KW-0808">Transferase</keyword>
<proteinExistence type="inferred from homology"/>
<comment type="function">
    <text evidence="1">Modifies, by uridylylation and deuridylylation, the PII regulatory proteins (GlnB and homologs), in response to the nitrogen status of the cell that GlnD senses through the glutamine level. Under low glutamine levels, catalyzes the conversion of the PII proteins and UTP to PII-UMP and PPi, while under higher glutamine levels, GlnD hydrolyzes PII-UMP to PII and UMP (deuridylylation). Thus, controls uridylylation state and activity of the PII proteins, and plays an important role in the regulation of nitrogen assimilation and metabolism.</text>
</comment>
<comment type="catalytic activity">
    <reaction evidence="1">
        <text>[protein-PII]-L-tyrosine + UTP = [protein-PII]-uridylyl-L-tyrosine + diphosphate</text>
        <dbReference type="Rhea" id="RHEA:13673"/>
        <dbReference type="Rhea" id="RHEA-COMP:12147"/>
        <dbReference type="Rhea" id="RHEA-COMP:12148"/>
        <dbReference type="ChEBI" id="CHEBI:33019"/>
        <dbReference type="ChEBI" id="CHEBI:46398"/>
        <dbReference type="ChEBI" id="CHEBI:46858"/>
        <dbReference type="ChEBI" id="CHEBI:90602"/>
        <dbReference type="EC" id="2.7.7.59"/>
    </reaction>
</comment>
<comment type="catalytic activity">
    <reaction evidence="1">
        <text>[protein-PII]-uridylyl-L-tyrosine + H2O = [protein-PII]-L-tyrosine + UMP + H(+)</text>
        <dbReference type="Rhea" id="RHEA:48600"/>
        <dbReference type="Rhea" id="RHEA-COMP:12147"/>
        <dbReference type="Rhea" id="RHEA-COMP:12148"/>
        <dbReference type="ChEBI" id="CHEBI:15377"/>
        <dbReference type="ChEBI" id="CHEBI:15378"/>
        <dbReference type="ChEBI" id="CHEBI:46858"/>
        <dbReference type="ChEBI" id="CHEBI:57865"/>
        <dbReference type="ChEBI" id="CHEBI:90602"/>
    </reaction>
</comment>
<comment type="cofactor">
    <cofactor evidence="1">
        <name>Mg(2+)</name>
        <dbReference type="ChEBI" id="CHEBI:18420"/>
    </cofactor>
</comment>
<comment type="activity regulation">
    <text evidence="1">Uridylyltransferase (UTase) activity is inhibited by glutamine, while glutamine activates uridylyl-removing (UR) activity.</text>
</comment>
<comment type="domain">
    <text evidence="1">Has four distinct domains: an N-terminal nucleotidyltransferase (NT) domain responsible for UTase activity, a central HD domain that encodes UR activity, and two C-terminal ACT domains that seem to have a role in glutamine sensing.</text>
</comment>
<comment type="similarity">
    <text evidence="1">Belongs to the GlnD family.</text>
</comment>